<organism>
    <name type="scientific">Chlamydia pneumoniae</name>
    <name type="common">Chlamydophila pneumoniae</name>
    <dbReference type="NCBI Taxonomy" id="83558"/>
    <lineage>
        <taxon>Bacteria</taxon>
        <taxon>Pseudomonadati</taxon>
        <taxon>Chlamydiota</taxon>
        <taxon>Chlamydiia</taxon>
        <taxon>Chlamydiales</taxon>
        <taxon>Chlamydiaceae</taxon>
        <taxon>Chlamydia/Chlamydophila group</taxon>
        <taxon>Chlamydia</taxon>
    </lineage>
</organism>
<accession>Q9Z8J2</accession>
<accession>Q9JSF8</accession>
<gene>
    <name type="primary">tlcA</name>
    <name type="synonym">adt_1</name>
    <name type="ordered locus">CPn_0351</name>
    <name type="ordered locus">CP_0408</name>
    <name type="ordered locus">CpB0359</name>
</gene>
<keyword id="KW-0067">ATP-binding</keyword>
<keyword id="KW-1003">Cell membrane</keyword>
<keyword id="KW-0472">Membrane</keyword>
<keyword id="KW-0547">Nucleotide-binding</keyword>
<keyword id="KW-0812">Transmembrane</keyword>
<keyword id="KW-1133">Transmembrane helix</keyword>
<keyword id="KW-0813">Transport</keyword>
<dbReference type="EMBL" id="AE001363">
    <property type="protein sequence ID" value="AAD18495.1"/>
    <property type="molecule type" value="Genomic_DNA"/>
</dbReference>
<dbReference type="EMBL" id="AE002161">
    <property type="protein sequence ID" value="AAF38252.1"/>
    <property type="molecule type" value="Genomic_DNA"/>
</dbReference>
<dbReference type="EMBL" id="BA000008">
    <property type="protein sequence ID" value="BAA98559.1"/>
    <property type="molecule type" value="Genomic_DNA"/>
</dbReference>
<dbReference type="EMBL" id="AE009440">
    <property type="protein sequence ID" value="AAP98290.1"/>
    <property type="molecule type" value="Genomic_DNA"/>
</dbReference>
<dbReference type="PIR" id="E72089">
    <property type="entry name" value="E72089"/>
</dbReference>
<dbReference type="PIR" id="E86534">
    <property type="entry name" value="E86534"/>
</dbReference>
<dbReference type="RefSeq" id="NP_224551.1">
    <property type="nucleotide sequence ID" value="NC_000922.1"/>
</dbReference>
<dbReference type="STRING" id="406984.CPK_ORF00859"/>
<dbReference type="GeneID" id="45050397"/>
<dbReference type="KEGG" id="cpa:CP_0408"/>
<dbReference type="KEGG" id="cpj:adt_1"/>
<dbReference type="KEGG" id="cpn:CPn_0351"/>
<dbReference type="KEGG" id="cpt:CpB0359"/>
<dbReference type="PATRIC" id="fig|115713.3.peg.388"/>
<dbReference type="eggNOG" id="COG3202">
    <property type="taxonomic scope" value="Bacteria"/>
</dbReference>
<dbReference type="HOGENOM" id="CLU_023964_0_1_0"/>
<dbReference type="OrthoDB" id="19786at2"/>
<dbReference type="Proteomes" id="UP000000583">
    <property type="component" value="Chromosome"/>
</dbReference>
<dbReference type="Proteomes" id="UP000000801">
    <property type="component" value="Chromosome"/>
</dbReference>
<dbReference type="GO" id="GO:0005886">
    <property type="term" value="C:plasma membrane"/>
    <property type="evidence" value="ECO:0007669"/>
    <property type="project" value="UniProtKB-SubCell"/>
</dbReference>
<dbReference type="GO" id="GO:0005524">
    <property type="term" value="F:ATP binding"/>
    <property type="evidence" value="ECO:0007669"/>
    <property type="project" value="UniProtKB-KW"/>
</dbReference>
<dbReference type="GO" id="GO:0005471">
    <property type="term" value="F:ATP:ADP antiporter activity"/>
    <property type="evidence" value="ECO:0007669"/>
    <property type="project" value="InterPro"/>
</dbReference>
<dbReference type="InterPro" id="IPR004667">
    <property type="entry name" value="ADP_ATP_car_bac_type"/>
</dbReference>
<dbReference type="InterPro" id="IPR036259">
    <property type="entry name" value="MFS_trans_sf"/>
</dbReference>
<dbReference type="NCBIfam" id="TIGR00769">
    <property type="entry name" value="AAA"/>
    <property type="match status" value="1"/>
</dbReference>
<dbReference type="PANTHER" id="PTHR31187">
    <property type="match status" value="1"/>
</dbReference>
<dbReference type="PANTHER" id="PTHR31187:SF1">
    <property type="entry name" value="ADP,ATP CARRIER PROTEIN 1"/>
    <property type="match status" value="1"/>
</dbReference>
<dbReference type="Pfam" id="PF03219">
    <property type="entry name" value="TLC"/>
    <property type="match status" value="1"/>
</dbReference>
<dbReference type="SUPFAM" id="SSF103473">
    <property type="entry name" value="MFS general substrate transporter"/>
    <property type="match status" value="1"/>
</dbReference>
<sequence length="515" mass="57197">MTKTEEKPFGKLRSFLWPIHTHELKKVLPMFLMFFCITFNYTVLRDTKDTLIVGAPGSGAEAIPFIKFWLVVPCAIIFMLIYAKLSNILSKQALFYAVGTPFLIFFALFPTVIYPLRDVLHPTEFADRLQAILPPGLLGLVAILRNWTFAAFYVLAELWGSVMLSLMFWGFANEITKIHEAKRFYALFGIGANISLLASGRAIVWASKLRASVSEGVDPWGISLRLLMAMTIVSGLVLMASYWWINKNVLTDPRFYNPEEMQKGKKGAKPKMNMKDSFLYLARSPYILLLALLVIAYGICINLIEVTWKSQLKLQYPNMNDYSEFMGNFSFWTGVVSVLIMLFVGGNVIRKFGWLTGALVTPVMVLLTGIVFFALVIFRNQASGLVAMFGTTPLMLAVVVGAIQNILSKSTKYALFDSTKEMAYIPLDQEQKVKGKAAIDVVAARFGKSGGALIQQGLLVICGSIGAMTPYLAVILLFIIAIWLVSATKLNKLFLAQSALKEQEVAQEDSAPASS</sequence>
<reference key="1">
    <citation type="journal article" date="1999" name="Nat. Genet.">
        <title>Comparative genomes of Chlamydia pneumoniae and C. trachomatis.</title>
        <authorList>
            <person name="Kalman S."/>
            <person name="Mitchell W.P."/>
            <person name="Marathe R."/>
            <person name="Lammel C.J."/>
            <person name="Fan J."/>
            <person name="Hyman R.W."/>
            <person name="Olinger L."/>
            <person name="Grimwood J."/>
            <person name="Davis R.W."/>
            <person name="Stephens R.S."/>
        </authorList>
    </citation>
    <scope>NUCLEOTIDE SEQUENCE [LARGE SCALE GENOMIC DNA]</scope>
    <source>
        <strain>CWL029</strain>
    </source>
</reference>
<reference key="2">
    <citation type="journal article" date="2000" name="Nucleic Acids Res.">
        <title>Genome sequences of Chlamydia trachomatis MoPn and Chlamydia pneumoniae AR39.</title>
        <authorList>
            <person name="Read T.D."/>
            <person name="Brunham R.C."/>
            <person name="Shen C."/>
            <person name="Gill S.R."/>
            <person name="Heidelberg J.F."/>
            <person name="White O."/>
            <person name="Hickey E.K."/>
            <person name="Peterson J.D."/>
            <person name="Utterback T.R."/>
            <person name="Berry K.J."/>
            <person name="Bass S."/>
            <person name="Linher K.D."/>
            <person name="Weidman J.F."/>
            <person name="Khouri H.M."/>
            <person name="Craven B."/>
            <person name="Bowman C."/>
            <person name="Dodson R.J."/>
            <person name="Gwinn M.L."/>
            <person name="Nelson W.C."/>
            <person name="DeBoy R.T."/>
            <person name="Kolonay J.F."/>
            <person name="McClarty G."/>
            <person name="Salzberg S.L."/>
            <person name="Eisen J.A."/>
            <person name="Fraser C.M."/>
        </authorList>
    </citation>
    <scope>NUCLEOTIDE SEQUENCE [LARGE SCALE GENOMIC DNA]</scope>
    <source>
        <strain>AR39</strain>
    </source>
</reference>
<reference key="3">
    <citation type="journal article" date="2000" name="Nucleic Acids Res.">
        <title>Comparison of whole genome sequences of Chlamydia pneumoniae J138 from Japan and CWL029 from USA.</title>
        <authorList>
            <person name="Shirai M."/>
            <person name="Hirakawa H."/>
            <person name="Kimoto M."/>
            <person name="Tabuchi M."/>
            <person name="Kishi F."/>
            <person name="Ouchi K."/>
            <person name="Shiba T."/>
            <person name="Ishii K."/>
            <person name="Hattori M."/>
            <person name="Kuhara S."/>
            <person name="Nakazawa T."/>
        </authorList>
    </citation>
    <scope>NUCLEOTIDE SEQUENCE [LARGE SCALE GENOMIC DNA]</scope>
    <source>
        <strain>J138</strain>
    </source>
</reference>
<reference key="4">
    <citation type="submission" date="2002-05" db="EMBL/GenBank/DDBJ databases">
        <title>The genome sequence of Chlamydia pneumoniae TW183 and comparison with other Chlamydia strains based on whole genome sequence analysis.</title>
        <authorList>
            <person name="Geng M.M."/>
            <person name="Schuhmacher A."/>
            <person name="Muehldorfer I."/>
            <person name="Bensch K.W."/>
            <person name="Schaefer K.P."/>
            <person name="Schneider S."/>
            <person name="Pohl T."/>
            <person name="Essig A."/>
            <person name="Marre R."/>
            <person name="Melchers K."/>
        </authorList>
    </citation>
    <scope>NUCLEOTIDE SEQUENCE [LARGE SCALE GENOMIC DNA]</scope>
    <source>
        <strain>TW-183</strain>
    </source>
</reference>
<evidence type="ECO:0000255" key="1"/>
<evidence type="ECO:0000305" key="2"/>
<feature type="chain" id="PRO_0000102586" description="ADP,ATP carrier protein 1">
    <location>
        <begin position="1"/>
        <end position="515"/>
    </location>
</feature>
<feature type="transmembrane region" description="Helical" evidence="1">
    <location>
        <begin position="24"/>
        <end position="44"/>
    </location>
</feature>
<feature type="transmembrane region" description="Helical" evidence="1">
    <location>
        <begin position="62"/>
        <end position="82"/>
    </location>
</feature>
<feature type="transmembrane region" description="Helical" evidence="1">
    <location>
        <begin position="93"/>
        <end position="113"/>
    </location>
</feature>
<feature type="transmembrane region" description="Helical" evidence="1">
    <location>
        <begin position="124"/>
        <end position="144"/>
    </location>
</feature>
<feature type="transmembrane region" description="Helical" evidence="1">
    <location>
        <begin position="149"/>
        <end position="169"/>
    </location>
</feature>
<feature type="transmembrane region" description="Helical" evidence="1">
    <location>
        <begin position="184"/>
        <end position="204"/>
    </location>
</feature>
<feature type="transmembrane region" description="Helical" evidence="1">
    <location>
        <begin position="226"/>
        <end position="246"/>
    </location>
</feature>
<feature type="transmembrane region" description="Helical" evidence="1">
    <location>
        <begin position="286"/>
        <end position="306"/>
    </location>
</feature>
<feature type="transmembrane region" description="Helical" evidence="1">
    <location>
        <begin position="329"/>
        <end position="349"/>
    </location>
</feature>
<feature type="transmembrane region" description="Helical" evidence="1">
    <location>
        <begin position="358"/>
        <end position="378"/>
    </location>
</feature>
<feature type="transmembrane region" description="Helical" evidence="1">
    <location>
        <begin position="383"/>
        <end position="403"/>
    </location>
</feature>
<feature type="transmembrane region" description="Helical" evidence="1">
    <location>
        <begin position="465"/>
        <end position="485"/>
    </location>
</feature>
<feature type="sequence conflict" description="In Ref. 3; BAA98559." evidence="2" ref="3">
    <original>V</original>
    <variation>D</variation>
    <location>
        <position position="141"/>
    </location>
</feature>
<protein>
    <recommendedName>
        <fullName>ADP,ATP carrier protein 1</fullName>
    </recommendedName>
    <alternativeName>
        <fullName>ADP/ATP translocase 1</fullName>
    </alternativeName>
</protein>
<comment type="subcellular location">
    <subcellularLocation>
        <location evidence="2">Cell membrane</location>
        <topology evidence="2">Multi-pass membrane protein</topology>
    </subcellularLocation>
</comment>
<comment type="similarity">
    <text evidence="2">Belongs to the ADP/ATP translocase tlc family.</text>
</comment>
<name>TLC1_CHLPN</name>
<proteinExistence type="inferred from homology"/>